<feature type="chain" id="PRO_0000354477" description="Large ribosomal subunit protein uL22">
    <location>
        <begin position="1"/>
        <end position="133"/>
    </location>
</feature>
<dbReference type="EMBL" id="CP000394">
    <property type="protein sequence ID" value="ABI61457.1"/>
    <property type="molecule type" value="Genomic_DNA"/>
</dbReference>
<dbReference type="RefSeq" id="WP_011631266.1">
    <property type="nucleotide sequence ID" value="NC_008343.2"/>
</dbReference>
<dbReference type="SMR" id="Q0BUP5"/>
<dbReference type="STRING" id="391165.GbCGDNIH1_0559"/>
<dbReference type="GeneID" id="69744812"/>
<dbReference type="KEGG" id="gbe:GbCGDNIH1_0559"/>
<dbReference type="eggNOG" id="COG0091">
    <property type="taxonomic scope" value="Bacteria"/>
</dbReference>
<dbReference type="HOGENOM" id="CLU_083987_3_0_5"/>
<dbReference type="OrthoDB" id="9805969at2"/>
<dbReference type="Proteomes" id="UP000001963">
    <property type="component" value="Chromosome"/>
</dbReference>
<dbReference type="GO" id="GO:0022625">
    <property type="term" value="C:cytosolic large ribosomal subunit"/>
    <property type="evidence" value="ECO:0007669"/>
    <property type="project" value="TreeGrafter"/>
</dbReference>
<dbReference type="GO" id="GO:0019843">
    <property type="term" value="F:rRNA binding"/>
    <property type="evidence" value="ECO:0007669"/>
    <property type="project" value="UniProtKB-UniRule"/>
</dbReference>
<dbReference type="GO" id="GO:0003735">
    <property type="term" value="F:structural constituent of ribosome"/>
    <property type="evidence" value="ECO:0007669"/>
    <property type="project" value="InterPro"/>
</dbReference>
<dbReference type="GO" id="GO:0006412">
    <property type="term" value="P:translation"/>
    <property type="evidence" value="ECO:0007669"/>
    <property type="project" value="UniProtKB-UniRule"/>
</dbReference>
<dbReference type="CDD" id="cd00336">
    <property type="entry name" value="Ribosomal_L22"/>
    <property type="match status" value="1"/>
</dbReference>
<dbReference type="Gene3D" id="3.90.470.10">
    <property type="entry name" value="Ribosomal protein L22/L17"/>
    <property type="match status" value="1"/>
</dbReference>
<dbReference type="HAMAP" id="MF_01331_B">
    <property type="entry name" value="Ribosomal_uL22_B"/>
    <property type="match status" value="1"/>
</dbReference>
<dbReference type="InterPro" id="IPR001063">
    <property type="entry name" value="Ribosomal_uL22"/>
</dbReference>
<dbReference type="InterPro" id="IPR005727">
    <property type="entry name" value="Ribosomal_uL22_bac/chlpt-type"/>
</dbReference>
<dbReference type="InterPro" id="IPR047867">
    <property type="entry name" value="Ribosomal_uL22_bac/org-type"/>
</dbReference>
<dbReference type="InterPro" id="IPR018260">
    <property type="entry name" value="Ribosomal_uL22_CS"/>
</dbReference>
<dbReference type="InterPro" id="IPR036394">
    <property type="entry name" value="Ribosomal_uL22_sf"/>
</dbReference>
<dbReference type="NCBIfam" id="TIGR01044">
    <property type="entry name" value="rplV_bact"/>
    <property type="match status" value="1"/>
</dbReference>
<dbReference type="PANTHER" id="PTHR13501">
    <property type="entry name" value="CHLOROPLAST 50S RIBOSOMAL PROTEIN L22-RELATED"/>
    <property type="match status" value="1"/>
</dbReference>
<dbReference type="PANTHER" id="PTHR13501:SF8">
    <property type="entry name" value="LARGE RIBOSOMAL SUBUNIT PROTEIN UL22M"/>
    <property type="match status" value="1"/>
</dbReference>
<dbReference type="Pfam" id="PF00237">
    <property type="entry name" value="Ribosomal_L22"/>
    <property type="match status" value="1"/>
</dbReference>
<dbReference type="SUPFAM" id="SSF54843">
    <property type="entry name" value="Ribosomal protein L22"/>
    <property type="match status" value="1"/>
</dbReference>
<dbReference type="PROSITE" id="PS00464">
    <property type="entry name" value="RIBOSOMAL_L22"/>
    <property type="match status" value="1"/>
</dbReference>
<reference key="1">
    <citation type="journal article" date="2007" name="J. Bacteriol.">
        <title>Genome sequence analysis of the emerging human pathogenic acetic acid bacterium Granulibacter bethesdensis.</title>
        <authorList>
            <person name="Greenberg D.E."/>
            <person name="Porcella S.F."/>
            <person name="Zelazny A.M."/>
            <person name="Virtaneva K."/>
            <person name="Sturdevant D.E."/>
            <person name="Kupko J.J. III"/>
            <person name="Barbian K.D."/>
            <person name="Babar A."/>
            <person name="Dorward D.W."/>
            <person name="Holland S.M."/>
        </authorList>
    </citation>
    <scope>NUCLEOTIDE SEQUENCE [LARGE SCALE GENOMIC DNA]</scope>
    <source>
        <strain>ATCC BAA-1260 / CGDNIH1</strain>
    </source>
</reference>
<proteinExistence type="inferred from homology"/>
<gene>
    <name evidence="1" type="primary">rplV</name>
    <name type="ordered locus">GbCGDNIH1_0559</name>
</gene>
<name>RL22_GRABC</name>
<comment type="function">
    <text evidence="1">This protein binds specifically to 23S rRNA; its binding is stimulated by other ribosomal proteins, e.g. L4, L17, and L20. It is important during the early stages of 50S assembly. It makes multiple contacts with different domains of the 23S rRNA in the assembled 50S subunit and ribosome (By similarity).</text>
</comment>
<comment type="function">
    <text evidence="1">The globular domain of the protein is located near the polypeptide exit tunnel on the outside of the subunit, while an extended beta-hairpin is found that lines the wall of the exit tunnel in the center of the 70S ribosome.</text>
</comment>
<comment type="subunit">
    <text evidence="1">Part of the 50S ribosomal subunit.</text>
</comment>
<comment type="similarity">
    <text evidence="1">Belongs to the universal ribosomal protein uL22 family.</text>
</comment>
<organism>
    <name type="scientific">Granulibacter bethesdensis (strain ATCC BAA-1260 / CGDNIH1)</name>
    <dbReference type="NCBI Taxonomy" id="391165"/>
    <lineage>
        <taxon>Bacteria</taxon>
        <taxon>Pseudomonadati</taxon>
        <taxon>Pseudomonadota</taxon>
        <taxon>Alphaproteobacteria</taxon>
        <taxon>Acetobacterales</taxon>
        <taxon>Acetobacteraceae</taxon>
        <taxon>Granulibacter</taxon>
    </lineage>
</organism>
<keyword id="KW-1185">Reference proteome</keyword>
<keyword id="KW-0687">Ribonucleoprotein</keyword>
<keyword id="KW-0689">Ribosomal protein</keyword>
<keyword id="KW-0694">RNA-binding</keyword>
<keyword id="KW-0699">rRNA-binding</keyword>
<accession>Q0BUP5</accession>
<sequence>MSKPKTPRSIAENEAQAIVSNLRVSPRKLNLVAQLIRNRKASDAVATLTFSKRRIAQAVKKALESAIANAENNHQLDVDRLVVSRAEVGRSIVMRRFHARGRGRAARVEKWFSHLKIVVAERSQETETKAEAA</sequence>
<protein>
    <recommendedName>
        <fullName evidence="1">Large ribosomal subunit protein uL22</fullName>
    </recommendedName>
    <alternativeName>
        <fullName evidence="2">50S ribosomal protein L22</fullName>
    </alternativeName>
</protein>
<evidence type="ECO:0000255" key="1">
    <source>
        <dbReference type="HAMAP-Rule" id="MF_01331"/>
    </source>
</evidence>
<evidence type="ECO:0000305" key="2"/>